<name>ISCS_HELPJ</name>
<protein>
    <recommendedName>
        <fullName evidence="1">Cysteine desulfurase IscS</fullName>
        <ecNumber evidence="1">2.8.1.7</ecNumber>
    </recommendedName>
</protein>
<dbReference type="EC" id="2.8.1.7" evidence="1"/>
<dbReference type="EMBL" id="AE001439">
    <property type="protein sequence ID" value="AAD05789.1"/>
    <property type="molecule type" value="Genomic_DNA"/>
</dbReference>
<dbReference type="PIR" id="A71960">
    <property type="entry name" value="A71960"/>
</dbReference>
<dbReference type="RefSeq" id="WP_000941654.1">
    <property type="nucleotide sequence ID" value="NZ_CP011330.1"/>
</dbReference>
<dbReference type="SMR" id="Q9ZML2"/>
<dbReference type="KEGG" id="hpj:jhp_0206"/>
<dbReference type="PATRIC" id="fig|85963.30.peg.811"/>
<dbReference type="eggNOG" id="COG1104">
    <property type="taxonomic scope" value="Bacteria"/>
</dbReference>
<dbReference type="UniPathway" id="UPA00266"/>
<dbReference type="Proteomes" id="UP000000804">
    <property type="component" value="Chromosome"/>
</dbReference>
<dbReference type="GO" id="GO:1990221">
    <property type="term" value="C:L-cysteine desulfurase complex"/>
    <property type="evidence" value="ECO:0007669"/>
    <property type="project" value="UniProtKB-ARBA"/>
</dbReference>
<dbReference type="GO" id="GO:0051537">
    <property type="term" value="F:2 iron, 2 sulfur cluster binding"/>
    <property type="evidence" value="ECO:0007669"/>
    <property type="project" value="UniProtKB-UniRule"/>
</dbReference>
<dbReference type="GO" id="GO:0031071">
    <property type="term" value="F:cysteine desulfurase activity"/>
    <property type="evidence" value="ECO:0007669"/>
    <property type="project" value="UniProtKB-UniRule"/>
</dbReference>
<dbReference type="GO" id="GO:0046872">
    <property type="term" value="F:metal ion binding"/>
    <property type="evidence" value="ECO:0007669"/>
    <property type="project" value="UniProtKB-KW"/>
</dbReference>
<dbReference type="GO" id="GO:0030170">
    <property type="term" value="F:pyridoxal phosphate binding"/>
    <property type="evidence" value="ECO:0007669"/>
    <property type="project" value="UniProtKB-UniRule"/>
</dbReference>
<dbReference type="GO" id="GO:0044571">
    <property type="term" value="P:[2Fe-2S] cluster assembly"/>
    <property type="evidence" value="ECO:0007669"/>
    <property type="project" value="UniProtKB-UniRule"/>
</dbReference>
<dbReference type="GO" id="GO:0006534">
    <property type="term" value="P:cysteine metabolic process"/>
    <property type="evidence" value="ECO:0007669"/>
    <property type="project" value="InterPro"/>
</dbReference>
<dbReference type="FunFam" id="3.40.640.10:FF:000084">
    <property type="entry name" value="IscS-like cysteine desulfurase"/>
    <property type="match status" value="1"/>
</dbReference>
<dbReference type="Gene3D" id="3.90.1150.10">
    <property type="entry name" value="Aspartate Aminotransferase, domain 1"/>
    <property type="match status" value="1"/>
</dbReference>
<dbReference type="Gene3D" id="3.40.640.10">
    <property type="entry name" value="Type I PLP-dependent aspartate aminotransferase-like (Major domain)"/>
    <property type="match status" value="1"/>
</dbReference>
<dbReference type="HAMAP" id="MF_00331">
    <property type="entry name" value="Cys_desulf_IscS"/>
    <property type="match status" value="1"/>
</dbReference>
<dbReference type="InterPro" id="IPR000192">
    <property type="entry name" value="Aminotrans_V_dom"/>
</dbReference>
<dbReference type="InterPro" id="IPR020578">
    <property type="entry name" value="Aminotrans_V_PyrdxlP_BS"/>
</dbReference>
<dbReference type="InterPro" id="IPR010240">
    <property type="entry name" value="Cys_deSase_IscS"/>
</dbReference>
<dbReference type="InterPro" id="IPR017773">
    <property type="entry name" value="Cys_deSase_NifS_proteobacteria"/>
</dbReference>
<dbReference type="InterPro" id="IPR016454">
    <property type="entry name" value="Cysteine_dSase"/>
</dbReference>
<dbReference type="InterPro" id="IPR015424">
    <property type="entry name" value="PyrdxlP-dep_Trfase"/>
</dbReference>
<dbReference type="InterPro" id="IPR015421">
    <property type="entry name" value="PyrdxlP-dep_Trfase_major"/>
</dbReference>
<dbReference type="InterPro" id="IPR015422">
    <property type="entry name" value="PyrdxlP-dep_Trfase_small"/>
</dbReference>
<dbReference type="NCBIfam" id="TIGR03403">
    <property type="entry name" value="nifS_epsilon"/>
    <property type="match status" value="1"/>
</dbReference>
<dbReference type="PANTHER" id="PTHR11601:SF34">
    <property type="entry name" value="CYSTEINE DESULFURASE"/>
    <property type="match status" value="1"/>
</dbReference>
<dbReference type="PANTHER" id="PTHR11601">
    <property type="entry name" value="CYSTEINE DESULFURYLASE FAMILY MEMBER"/>
    <property type="match status" value="1"/>
</dbReference>
<dbReference type="Pfam" id="PF00266">
    <property type="entry name" value="Aminotran_5"/>
    <property type="match status" value="1"/>
</dbReference>
<dbReference type="PIRSF" id="PIRSF005572">
    <property type="entry name" value="NifS"/>
    <property type="match status" value="1"/>
</dbReference>
<dbReference type="SUPFAM" id="SSF53383">
    <property type="entry name" value="PLP-dependent transferases"/>
    <property type="match status" value="1"/>
</dbReference>
<dbReference type="PROSITE" id="PS00595">
    <property type="entry name" value="AA_TRANSFER_CLASS_5"/>
    <property type="match status" value="1"/>
</dbReference>
<gene>
    <name evidence="1" type="primary">iscS</name>
    <name type="ordered locus">jhp_0206</name>
</gene>
<feature type="chain" id="PRO_0000150270" description="Cysteine desulfurase IscS">
    <location>
        <begin position="1"/>
        <end position="387"/>
    </location>
</feature>
<feature type="active site" description="Cysteine persulfide intermediate" evidence="1">
    <location>
        <position position="328"/>
    </location>
</feature>
<feature type="binding site" evidence="1">
    <location>
        <begin position="73"/>
        <end position="74"/>
    </location>
    <ligand>
        <name>pyridoxal 5'-phosphate</name>
        <dbReference type="ChEBI" id="CHEBI:597326"/>
    </ligand>
</feature>
<feature type="binding site" evidence="1">
    <location>
        <position position="155"/>
    </location>
    <ligand>
        <name>pyridoxal 5'-phosphate</name>
        <dbReference type="ChEBI" id="CHEBI:597326"/>
    </ligand>
</feature>
<feature type="binding site" evidence="1">
    <location>
        <position position="183"/>
    </location>
    <ligand>
        <name>pyridoxal 5'-phosphate</name>
        <dbReference type="ChEBI" id="CHEBI:597326"/>
    </ligand>
</feature>
<feature type="binding site" evidence="1">
    <location>
        <begin position="203"/>
        <end position="205"/>
    </location>
    <ligand>
        <name>pyridoxal 5'-phosphate</name>
        <dbReference type="ChEBI" id="CHEBI:597326"/>
    </ligand>
</feature>
<feature type="binding site" evidence="1">
    <location>
        <position position="241"/>
    </location>
    <ligand>
        <name>pyridoxal 5'-phosphate</name>
        <dbReference type="ChEBI" id="CHEBI:597326"/>
    </ligand>
</feature>
<feature type="binding site" description="via persulfide group" evidence="1">
    <location>
        <position position="328"/>
    </location>
    <ligand>
        <name>[2Fe-2S] cluster</name>
        <dbReference type="ChEBI" id="CHEBI:190135"/>
        <note>ligand shared with IscU</note>
    </ligand>
</feature>
<feature type="modified residue" description="N6-(pyridoxal phosphate)lysine" evidence="1">
    <location>
        <position position="206"/>
    </location>
</feature>
<evidence type="ECO:0000255" key="1">
    <source>
        <dbReference type="HAMAP-Rule" id="MF_00331"/>
    </source>
</evidence>
<proteinExistence type="inferred from homology"/>
<organism>
    <name type="scientific">Helicobacter pylori (strain J99 / ATCC 700824)</name>
    <name type="common">Campylobacter pylori J99</name>
    <dbReference type="NCBI Taxonomy" id="85963"/>
    <lineage>
        <taxon>Bacteria</taxon>
        <taxon>Pseudomonadati</taxon>
        <taxon>Campylobacterota</taxon>
        <taxon>Epsilonproteobacteria</taxon>
        <taxon>Campylobacterales</taxon>
        <taxon>Helicobacteraceae</taxon>
        <taxon>Helicobacter</taxon>
    </lineage>
</organism>
<keyword id="KW-0001">2Fe-2S</keyword>
<keyword id="KW-0963">Cytoplasm</keyword>
<keyword id="KW-0408">Iron</keyword>
<keyword id="KW-0411">Iron-sulfur</keyword>
<keyword id="KW-0479">Metal-binding</keyword>
<keyword id="KW-0663">Pyridoxal phosphate</keyword>
<keyword id="KW-0808">Transferase</keyword>
<reference key="1">
    <citation type="journal article" date="1999" name="Nature">
        <title>Genomic sequence comparison of two unrelated isolates of the human gastric pathogen Helicobacter pylori.</title>
        <authorList>
            <person name="Alm R.A."/>
            <person name="Ling L.-S.L."/>
            <person name="Moir D.T."/>
            <person name="King B.L."/>
            <person name="Brown E.D."/>
            <person name="Doig P.C."/>
            <person name="Smith D.R."/>
            <person name="Noonan B."/>
            <person name="Guild B.C."/>
            <person name="deJonge B.L."/>
            <person name="Carmel G."/>
            <person name="Tummino P.J."/>
            <person name="Caruso A."/>
            <person name="Uria-Nickelsen M."/>
            <person name="Mills D.M."/>
            <person name="Ives C."/>
            <person name="Gibson R."/>
            <person name="Merberg D."/>
            <person name="Mills S.D."/>
            <person name="Jiang Q."/>
            <person name="Taylor D.E."/>
            <person name="Vovis G.F."/>
            <person name="Trust T.J."/>
        </authorList>
    </citation>
    <scope>NUCLEOTIDE SEQUENCE [LARGE SCALE GENOMIC DNA]</scope>
    <source>
        <strain>J99 / ATCC 700824</strain>
    </source>
</reference>
<accession>Q9ZML2</accession>
<comment type="function">
    <text evidence="1">Master enzyme that delivers sulfur to a number of partners involved in Fe-S cluster assembly, tRNA modification or cofactor biosynthesis. Catalyzes the removal of elemental sulfur atoms from cysteine to produce alanine. Functions as a sulfur delivery protein for Fe-S cluster synthesis onto IscU, an Fe-S scaffold assembly protein, as well as other S acceptor proteins.</text>
</comment>
<comment type="catalytic activity">
    <reaction evidence="1">
        <text>(sulfur carrier)-H + L-cysteine = (sulfur carrier)-SH + L-alanine</text>
        <dbReference type="Rhea" id="RHEA:43892"/>
        <dbReference type="Rhea" id="RHEA-COMP:14737"/>
        <dbReference type="Rhea" id="RHEA-COMP:14739"/>
        <dbReference type="ChEBI" id="CHEBI:29917"/>
        <dbReference type="ChEBI" id="CHEBI:35235"/>
        <dbReference type="ChEBI" id="CHEBI:57972"/>
        <dbReference type="ChEBI" id="CHEBI:64428"/>
        <dbReference type="EC" id="2.8.1.7"/>
    </reaction>
</comment>
<comment type="cofactor">
    <cofactor evidence="1">
        <name>pyridoxal 5'-phosphate</name>
        <dbReference type="ChEBI" id="CHEBI:597326"/>
    </cofactor>
</comment>
<comment type="pathway">
    <text evidence="1">Cofactor biosynthesis; iron-sulfur cluster biosynthesis.</text>
</comment>
<comment type="subunit">
    <text evidence="1">Homodimer. Forms a heterotetramer with IscU, interacts with other sulfur acceptors.</text>
</comment>
<comment type="subcellular location">
    <subcellularLocation>
        <location evidence="1">Cytoplasm</location>
    </subcellularLocation>
</comment>
<comment type="similarity">
    <text evidence="1">Belongs to the class-V pyridoxal-phosphate-dependent aminotransferase family. NifS/IscS subfamily.</text>
</comment>
<sequence>MLQRIYLDNNATTRIDPKVKEIMDPFLRDHYGNPSSLHQFGTETHPAIAEALDKLYKGINARDIDDVIITSCATESNNWVLKGVYFDECLKKGKNHIITTVAEHPAVRSTCNFLESLGVEVTYLPINEHGSITADQVKEAITEKTALVSVMWANNETGLIFPIEEIGAICKEKGVLFHTDAVQAIGKIPVDVLKANVDFLSFSAHKFHGPKGIGGLYIRSGVGLTPLFHGGEHMNGRRSGTLNVPYIVGMGEAMKLAVEHLDYEKEVVGKLRDKLEEALLKIPDVMVVGDRVHRVPNTTLISVRGIEGEAMLWDLNRSNIAASTGSACASEDLEANPVMVAIGASKELAHTAIRLSLSRFNTEAEIDKTIEVFSQAAVRLRNISSSY</sequence>